<accession>Q3YRB6</accession>
<feature type="chain" id="PRO_1000009719" description="dCTP deaminase">
    <location>
        <begin position="1"/>
        <end position="187"/>
    </location>
</feature>
<feature type="active site" description="Proton donor/acceptor" evidence="1">
    <location>
        <position position="133"/>
    </location>
</feature>
<feature type="binding site" evidence="1">
    <location>
        <begin position="107"/>
        <end position="112"/>
    </location>
    <ligand>
        <name>dCTP</name>
        <dbReference type="ChEBI" id="CHEBI:61481"/>
    </ligand>
</feature>
<feature type="binding site" evidence="1">
    <location>
        <begin position="131"/>
        <end position="133"/>
    </location>
    <ligand>
        <name>dCTP</name>
        <dbReference type="ChEBI" id="CHEBI:61481"/>
    </ligand>
</feature>
<feature type="binding site" evidence="1">
    <location>
        <position position="152"/>
    </location>
    <ligand>
        <name>dCTP</name>
        <dbReference type="ChEBI" id="CHEBI:61481"/>
    </ligand>
</feature>
<feature type="binding site" evidence="1">
    <location>
        <position position="166"/>
    </location>
    <ligand>
        <name>dCTP</name>
        <dbReference type="ChEBI" id="CHEBI:61481"/>
    </ligand>
</feature>
<feature type="binding site" evidence="1">
    <location>
        <position position="175"/>
    </location>
    <ligand>
        <name>dCTP</name>
        <dbReference type="ChEBI" id="CHEBI:61481"/>
    </ligand>
</feature>
<feature type="binding site" evidence="1">
    <location>
        <position position="176"/>
    </location>
    <ligand>
        <name>dCTP</name>
        <dbReference type="ChEBI" id="CHEBI:61481"/>
    </ligand>
</feature>
<reference key="1">
    <citation type="journal article" date="2006" name="J. Bacteriol.">
        <title>The genome of the obligately intracellular bacterium Ehrlichia canis reveals themes of complex membrane structure and immune evasion strategies.</title>
        <authorList>
            <person name="Mavromatis K."/>
            <person name="Doyle C.K."/>
            <person name="Lykidis A."/>
            <person name="Ivanova N."/>
            <person name="Francino M.P."/>
            <person name="Chain P."/>
            <person name="Shin M."/>
            <person name="Malfatti S."/>
            <person name="Larimer F."/>
            <person name="Copeland A."/>
            <person name="Detter J.C."/>
            <person name="Land M."/>
            <person name="Richardson P.M."/>
            <person name="Yu X.J."/>
            <person name="Walker D.H."/>
            <person name="McBride J.W."/>
            <person name="Kyrpides N.C."/>
        </authorList>
    </citation>
    <scope>NUCLEOTIDE SEQUENCE [LARGE SCALE GENOMIC DNA]</scope>
    <source>
        <strain>Jake</strain>
    </source>
</reference>
<comment type="function">
    <text evidence="1">Catalyzes the deamination of dCTP to dUTP.</text>
</comment>
<comment type="catalytic activity">
    <reaction evidence="1">
        <text>dCTP + H2O + H(+) = dUTP + NH4(+)</text>
        <dbReference type="Rhea" id="RHEA:22680"/>
        <dbReference type="ChEBI" id="CHEBI:15377"/>
        <dbReference type="ChEBI" id="CHEBI:15378"/>
        <dbReference type="ChEBI" id="CHEBI:28938"/>
        <dbReference type="ChEBI" id="CHEBI:61481"/>
        <dbReference type="ChEBI" id="CHEBI:61555"/>
        <dbReference type="EC" id="3.5.4.13"/>
    </reaction>
</comment>
<comment type="pathway">
    <text evidence="1">Pyrimidine metabolism; dUMP biosynthesis; dUMP from dCTP (dUTP route): step 1/2.</text>
</comment>
<comment type="subunit">
    <text evidence="1">Homotrimer.</text>
</comment>
<comment type="similarity">
    <text evidence="1">Belongs to the dCTP deaminase family.</text>
</comment>
<evidence type="ECO:0000255" key="1">
    <source>
        <dbReference type="HAMAP-Rule" id="MF_00146"/>
    </source>
</evidence>
<protein>
    <recommendedName>
        <fullName evidence="1">dCTP deaminase</fullName>
        <ecNumber evidence="1">3.5.4.13</ecNumber>
    </recommendedName>
    <alternativeName>
        <fullName evidence="1">Deoxycytidine triphosphate deaminase</fullName>
    </alternativeName>
</protein>
<name>DCD_EHRCJ</name>
<keyword id="KW-0378">Hydrolase</keyword>
<keyword id="KW-0546">Nucleotide metabolism</keyword>
<keyword id="KW-0547">Nucleotide-binding</keyword>
<organism>
    <name type="scientific">Ehrlichia canis (strain Jake)</name>
    <dbReference type="NCBI Taxonomy" id="269484"/>
    <lineage>
        <taxon>Bacteria</taxon>
        <taxon>Pseudomonadati</taxon>
        <taxon>Pseudomonadota</taxon>
        <taxon>Alphaproteobacteria</taxon>
        <taxon>Rickettsiales</taxon>
        <taxon>Anaplasmataceae</taxon>
        <taxon>Ehrlichia</taxon>
    </lineage>
</organism>
<gene>
    <name evidence="1" type="primary">dcd</name>
    <name type="ordered locus">Ecaj_0707</name>
</gene>
<proteinExistence type="inferred from homology"/>
<sequence>MSVMPDHWIKDKAIQEKMIDPFIDYKESSGILSYGLSSYGYDARIDNKFKIFTNINPVTVDPKNFPLGSFIDKEEDICIIPPNSFVLAKTVEYFKIPKDILVMCVGKSTYARCGIVVNVTPLEPGWEGYVTLEFSNTTPLPAKIYAFEGACQFIFLKGDSQCSLSYNEMKGKYMKQLDVTLPIVNNS</sequence>
<dbReference type="EC" id="3.5.4.13" evidence="1"/>
<dbReference type="EMBL" id="CP000107">
    <property type="protein sequence ID" value="AAZ68739.1"/>
    <property type="molecule type" value="Genomic_DNA"/>
</dbReference>
<dbReference type="RefSeq" id="WP_011304816.1">
    <property type="nucleotide sequence ID" value="NC_007354.1"/>
</dbReference>
<dbReference type="SMR" id="Q3YRB6"/>
<dbReference type="FunCoup" id="Q3YRB6">
    <property type="interactions" value="123"/>
</dbReference>
<dbReference type="STRING" id="269484.Ecaj_0707"/>
<dbReference type="KEGG" id="ecn:Ecaj_0707"/>
<dbReference type="eggNOG" id="COG0717">
    <property type="taxonomic scope" value="Bacteria"/>
</dbReference>
<dbReference type="HOGENOM" id="CLU_087476_4_0_5"/>
<dbReference type="InParanoid" id="Q3YRB6"/>
<dbReference type="UniPathway" id="UPA00610">
    <property type="reaction ID" value="UER00665"/>
</dbReference>
<dbReference type="Proteomes" id="UP000000435">
    <property type="component" value="Chromosome"/>
</dbReference>
<dbReference type="GO" id="GO:0008829">
    <property type="term" value="F:dCTP deaminase activity"/>
    <property type="evidence" value="ECO:0007669"/>
    <property type="project" value="UniProtKB-UniRule"/>
</dbReference>
<dbReference type="GO" id="GO:0000166">
    <property type="term" value="F:nucleotide binding"/>
    <property type="evidence" value="ECO:0007669"/>
    <property type="project" value="UniProtKB-KW"/>
</dbReference>
<dbReference type="GO" id="GO:0006226">
    <property type="term" value="P:dUMP biosynthetic process"/>
    <property type="evidence" value="ECO:0007669"/>
    <property type="project" value="UniProtKB-UniPathway"/>
</dbReference>
<dbReference type="GO" id="GO:0006229">
    <property type="term" value="P:dUTP biosynthetic process"/>
    <property type="evidence" value="ECO:0007669"/>
    <property type="project" value="UniProtKB-UniRule"/>
</dbReference>
<dbReference type="CDD" id="cd07557">
    <property type="entry name" value="trimeric_dUTPase"/>
    <property type="match status" value="1"/>
</dbReference>
<dbReference type="FunFam" id="2.70.40.10:FF:000001">
    <property type="entry name" value="dCTP deaminase"/>
    <property type="match status" value="1"/>
</dbReference>
<dbReference type="Gene3D" id="2.70.40.10">
    <property type="match status" value="1"/>
</dbReference>
<dbReference type="HAMAP" id="MF_00146">
    <property type="entry name" value="dCTP_deaminase"/>
    <property type="match status" value="1"/>
</dbReference>
<dbReference type="InterPro" id="IPR011962">
    <property type="entry name" value="dCTP_deaminase"/>
</dbReference>
<dbReference type="InterPro" id="IPR036157">
    <property type="entry name" value="dUTPase-like_sf"/>
</dbReference>
<dbReference type="InterPro" id="IPR033704">
    <property type="entry name" value="dUTPase_trimeric"/>
</dbReference>
<dbReference type="NCBIfam" id="TIGR02274">
    <property type="entry name" value="dCTP_deam"/>
    <property type="match status" value="1"/>
</dbReference>
<dbReference type="PANTHER" id="PTHR42680">
    <property type="entry name" value="DCTP DEAMINASE"/>
    <property type="match status" value="1"/>
</dbReference>
<dbReference type="PANTHER" id="PTHR42680:SF3">
    <property type="entry name" value="DCTP DEAMINASE"/>
    <property type="match status" value="1"/>
</dbReference>
<dbReference type="Pfam" id="PF22769">
    <property type="entry name" value="DCD"/>
    <property type="match status" value="1"/>
</dbReference>
<dbReference type="SUPFAM" id="SSF51283">
    <property type="entry name" value="dUTPase-like"/>
    <property type="match status" value="1"/>
</dbReference>